<feature type="transit peptide" description="Chloroplast" evidence="2">
    <location>
        <begin position="1"/>
        <end position="56"/>
    </location>
</feature>
<feature type="chain" id="PRO_0000000577" description="Acyl carrier protein 1, chloroplastic">
    <location>
        <begin position="57"/>
        <end position="140"/>
    </location>
</feature>
<feature type="domain" description="Carrier" evidence="3">
    <location>
        <begin position="60"/>
        <end position="135"/>
    </location>
</feature>
<feature type="modified residue" description="O-(pantetheine 4'-phosphoryl)serine" evidence="3">
    <location>
        <position position="95"/>
    </location>
</feature>
<name>ACP1_CUPLA</name>
<protein>
    <recommendedName>
        <fullName>Acyl carrier protein 1, chloroplastic</fullName>
        <shortName>ACP</shortName>
    </recommendedName>
</protein>
<dbReference type="EMBL" id="X77620">
    <property type="protein sequence ID" value="CAA54714.1"/>
    <property type="molecule type" value="mRNA"/>
</dbReference>
<dbReference type="PIR" id="S42028">
    <property type="entry name" value="S42028"/>
</dbReference>
<dbReference type="SMR" id="P52411"/>
<dbReference type="UniPathway" id="UPA00094"/>
<dbReference type="GO" id="GO:0009507">
    <property type="term" value="C:chloroplast"/>
    <property type="evidence" value="ECO:0007669"/>
    <property type="project" value="UniProtKB-SubCell"/>
</dbReference>
<dbReference type="GO" id="GO:0000036">
    <property type="term" value="F:acyl carrier activity"/>
    <property type="evidence" value="ECO:0007669"/>
    <property type="project" value="InterPro"/>
</dbReference>
<dbReference type="Gene3D" id="1.10.1200.10">
    <property type="entry name" value="ACP-like"/>
    <property type="match status" value="1"/>
</dbReference>
<dbReference type="HAMAP" id="MF_01217">
    <property type="entry name" value="Acyl_carrier"/>
    <property type="match status" value="1"/>
</dbReference>
<dbReference type="InterPro" id="IPR003231">
    <property type="entry name" value="ACP"/>
</dbReference>
<dbReference type="InterPro" id="IPR036736">
    <property type="entry name" value="ACP-like_sf"/>
</dbReference>
<dbReference type="InterPro" id="IPR044813">
    <property type="entry name" value="ACP_chloroplastic"/>
</dbReference>
<dbReference type="InterPro" id="IPR009081">
    <property type="entry name" value="PP-bd_ACP"/>
</dbReference>
<dbReference type="InterPro" id="IPR006162">
    <property type="entry name" value="Ppantetheine_attach_site"/>
</dbReference>
<dbReference type="NCBIfam" id="TIGR00517">
    <property type="entry name" value="acyl_carrier"/>
    <property type="match status" value="1"/>
</dbReference>
<dbReference type="PANTHER" id="PTHR46153">
    <property type="entry name" value="ACYL CARRIER PROTEIN"/>
    <property type="match status" value="1"/>
</dbReference>
<dbReference type="PANTHER" id="PTHR46153:SF29">
    <property type="entry name" value="ACYL CARRIER PROTEIN"/>
    <property type="match status" value="1"/>
</dbReference>
<dbReference type="Pfam" id="PF00550">
    <property type="entry name" value="PP-binding"/>
    <property type="match status" value="1"/>
</dbReference>
<dbReference type="SUPFAM" id="SSF47336">
    <property type="entry name" value="ACP-like"/>
    <property type="match status" value="1"/>
</dbReference>
<dbReference type="PROSITE" id="PS50075">
    <property type="entry name" value="CARRIER"/>
    <property type="match status" value="1"/>
</dbReference>
<dbReference type="PROSITE" id="PS00012">
    <property type="entry name" value="PHOSPHOPANTETHEINE"/>
    <property type="match status" value="1"/>
</dbReference>
<keyword id="KW-0150">Chloroplast</keyword>
<keyword id="KW-0275">Fatty acid biosynthesis</keyword>
<keyword id="KW-0276">Fatty acid metabolism</keyword>
<keyword id="KW-0444">Lipid biosynthesis</keyword>
<keyword id="KW-0443">Lipid metabolism</keyword>
<keyword id="KW-0596">Phosphopantetheine</keyword>
<keyword id="KW-0597">Phosphoprotein</keyword>
<keyword id="KW-0934">Plastid</keyword>
<keyword id="KW-0809">Transit peptide</keyword>
<proteinExistence type="evidence at transcript level"/>
<reference key="1">
    <citation type="journal article" date="1994" name="Plant Physiol.">
        <title>Three different cDNAs encoding acyl carrier proteins from Cuphea lanceolata.</title>
        <authorList>
            <person name="Voetz M."/>
            <person name="Klein B."/>
            <person name="Schell J."/>
            <person name="Toepfer R."/>
        </authorList>
    </citation>
    <scope>NUCLEOTIDE SEQUENCE [MRNA]</scope>
</reference>
<gene>
    <name type="primary">ACL1.1</name>
    <name type="synonym">ACP1-1</name>
</gene>
<organism>
    <name type="scientific">Cuphea lanceolata</name>
    <name type="common">Cigar flower</name>
    <dbReference type="NCBI Taxonomy" id="3930"/>
    <lineage>
        <taxon>Eukaryota</taxon>
        <taxon>Viridiplantae</taxon>
        <taxon>Streptophyta</taxon>
        <taxon>Embryophyta</taxon>
        <taxon>Tracheophyta</taxon>
        <taxon>Spermatophyta</taxon>
        <taxon>Magnoliopsida</taxon>
        <taxon>eudicotyledons</taxon>
        <taxon>Gunneridae</taxon>
        <taxon>Pentapetalae</taxon>
        <taxon>rosids</taxon>
        <taxon>malvids</taxon>
        <taxon>Myrtales</taxon>
        <taxon>Lythraceae</taxon>
        <taxon>Cuphea</taxon>
    </lineage>
</organism>
<comment type="function">
    <text>Carrier of the growing fatty acid chain in fatty acid biosynthesis.</text>
</comment>
<comment type="pathway">
    <text>Lipid metabolism; fatty acid biosynthesis.</text>
</comment>
<comment type="subcellular location">
    <subcellularLocation>
        <location>Plastid</location>
        <location>Chloroplast</location>
    </subcellularLocation>
</comment>
<comment type="PTM">
    <text evidence="1">4'-phosphopantetheine is transferred from CoA to a specific serine of apo-ACP by acpS. This modification is essential for activity because fatty acids are bound in thioester linkage to the sulfhydryl of the prosthetic group (By similarity).</text>
</comment>
<comment type="similarity">
    <text evidence="4">Belongs to the acyl carrier protein (ACP) family.</text>
</comment>
<accession>P52411</accession>
<sequence>MASAAAGASICIKSASFSPLAPGRISSLRSVSLPVSRKSFPSLKSSKSSFALRVSCQAKPETVAKVCGIVKKQLALPDDSEVNGLSKFSALGADSLDTVEIVMGLEEEFGISVEEESAQSIQTVQDAADLIEKLMEKKGH</sequence>
<evidence type="ECO:0000250" key="1"/>
<evidence type="ECO:0000255" key="2"/>
<evidence type="ECO:0000255" key="3">
    <source>
        <dbReference type="PROSITE-ProRule" id="PRU00258"/>
    </source>
</evidence>
<evidence type="ECO:0000305" key="4"/>